<accession>A8MPR5</accession>
<name>FTSI2_ARATH</name>
<proteinExistence type="evidence at protein level"/>
<organism>
    <name type="scientific">Arabidopsis thaliana</name>
    <name type="common">Mouse-ear cress</name>
    <dbReference type="NCBI Taxonomy" id="3702"/>
    <lineage>
        <taxon>Eukaryota</taxon>
        <taxon>Viridiplantae</taxon>
        <taxon>Streptophyta</taxon>
        <taxon>Embryophyta</taxon>
        <taxon>Tracheophyta</taxon>
        <taxon>Spermatophyta</taxon>
        <taxon>Magnoliopsida</taxon>
        <taxon>eudicotyledons</taxon>
        <taxon>Gunneridae</taxon>
        <taxon>Pentapetalae</taxon>
        <taxon>rosids</taxon>
        <taxon>malvids</taxon>
        <taxon>Brassicales</taxon>
        <taxon>Brassicaceae</taxon>
        <taxon>Camelineae</taxon>
        <taxon>Arabidopsis</taxon>
    </lineage>
</organism>
<protein>
    <recommendedName>
        <fullName>Probable inactive ATP-dependent zinc metalloprotease FTSHI 2, chloroplastic</fullName>
        <shortName evidence="4">AtFTSHI2</shortName>
    </recommendedName>
    <alternativeName>
        <fullName evidence="6">Protein EMBRYO DEFECTIVE 2083</fullName>
    </alternativeName>
    <alternativeName>
        <fullName evidence="4">Protein FTSH INACTIVE PROTEASE 2</fullName>
    </alternativeName>
</protein>
<dbReference type="EMBL" id="AB023046">
    <property type="protein sequence ID" value="BAB01269.1"/>
    <property type="status" value="ALT_SEQ"/>
    <property type="molecule type" value="Genomic_DNA"/>
</dbReference>
<dbReference type="EMBL" id="AC001645">
    <property type="protein sequence ID" value="AAB63647.1"/>
    <property type="status" value="ALT_SEQ"/>
    <property type="molecule type" value="Genomic_DNA"/>
</dbReference>
<dbReference type="EMBL" id="CP002686">
    <property type="protein sequence ID" value="AEE75794.1"/>
    <property type="molecule type" value="Genomic_DNA"/>
</dbReference>
<dbReference type="EMBL" id="BX823945">
    <property type="status" value="NOT_ANNOTATED_CDS"/>
    <property type="molecule type" value="mRNA"/>
</dbReference>
<dbReference type="RefSeq" id="NP_566541.1">
    <property type="nucleotide sequence ID" value="NM_112500.3"/>
</dbReference>
<dbReference type="PDB" id="8XKU">
    <property type="method" value="EM"/>
    <property type="resolution" value="3.20 A"/>
    <property type="chains" value="F=1-876"/>
</dbReference>
<dbReference type="PDB" id="8XKV">
    <property type="method" value="EM"/>
    <property type="resolution" value="3.30 A"/>
    <property type="chains" value="F=1-876"/>
</dbReference>
<dbReference type="PDBsum" id="8XKU"/>
<dbReference type="PDBsum" id="8XKV"/>
<dbReference type="EMDB" id="EMD-38425"/>
<dbReference type="EMDB" id="EMD-38428"/>
<dbReference type="SMR" id="A8MPR5"/>
<dbReference type="FunCoup" id="A8MPR5">
    <property type="interactions" value="1692"/>
</dbReference>
<dbReference type="IntAct" id="A8MPR5">
    <property type="interactions" value="1"/>
</dbReference>
<dbReference type="STRING" id="3702.A8MPR5"/>
<dbReference type="PaxDb" id="3702-AT3G16290.1"/>
<dbReference type="ProteomicsDB" id="228889"/>
<dbReference type="EnsemblPlants" id="AT3G16290.1">
    <property type="protein sequence ID" value="AT3G16290.1"/>
    <property type="gene ID" value="AT3G16290"/>
</dbReference>
<dbReference type="GeneID" id="820876"/>
<dbReference type="Gramene" id="AT3G16290.1">
    <property type="protein sequence ID" value="AT3G16290.1"/>
    <property type="gene ID" value="AT3G16290"/>
</dbReference>
<dbReference type="KEGG" id="ath:AT3G16290"/>
<dbReference type="Araport" id="AT3G16290"/>
<dbReference type="TAIR" id="AT3G16290">
    <property type="gene designation" value="EMB2083"/>
</dbReference>
<dbReference type="eggNOG" id="KOG0731">
    <property type="taxonomic scope" value="Eukaryota"/>
</dbReference>
<dbReference type="HOGENOM" id="CLU_000688_5_1_1"/>
<dbReference type="InParanoid" id="A8MPR5"/>
<dbReference type="OMA" id="CINAYTP"/>
<dbReference type="PhylomeDB" id="A8MPR5"/>
<dbReference type="PRO" id="PR:A8MPR5"/>
<dbReference type="Proteomes" id="UP000006548">
    <property type="component" value="Chromosome 3"/>
</dbReference>
<dbReference type="ExpressionAtlas" id="A8MPR5">
    <property type="expression patterns" value="baseline and differential"/>
</dbReference>
<dbReference type="GO" id="GO:0009507">
    <property type="term" value="C:chloroplast"/>
    <property type="evidence" value="ECO:0007005"/>
    <property type="project" value="TAIR"/>
</dbReference>
<dbReference type="GO" id="GO:0009941">
    <property type="term" value="C:chloroplast envelope"/>
    <property type="evidence" value="ECO:0000314"/>
    <property type="project" value="TAIR"/>
</dbReference>
<dbReference type="GO" id="GO:0031969">
    <property type="term" value="C:chloroplast membrane"/>
    <property type="evidence" value="ECO:0007669"/>
    <property type="project" value="UniProtKB-SubCell"/>
</dbReference>
<dbReference type="GO" id="GO:0062091">
    <property type="term" value="C:Ycf2/FtsHi complex"/>
    <property type="evidence" value="ECO:0000314"/>
    <property type="project" value="TAIR"/>
</dbReference>
<dbReference type="GO" id="GO:0005524">
    <property type="term" value="F:ATP binding"/>
    <property type="evidence" value="ECO:0007669"/>
    <property type="project" value="UniProtKB-KW"/>
</dbReference>
<dbReference type="GO" id="GO:0016887">
    <property type="term" value="F:ATP hydrolysis activity"/>
    <property type="evidence" value="ECO:0007669"/>
    <property type="project" value="InterPro"/>
</dbReference>
<dbReference type="GO" id="GO:0004176">
    <property type="term" value="F:ATP-dependent peptidase activity"/>
    <property type="evidence" value="ECO:0007669"/>
    <property type="project" value="InterPro"/>
</dbReference>
<dbReference type="GO" id="GO:0016464">
    <property type="term" value="F:chloroplast protein-transporting ATPase activity"/>
    <property type="evidence" value="ECO:0000314"/>
    <property type="project" value="TAIR"/>
</dbReference>
<dbReference type="GO" id="GO:0004222">
    <property type="term" value="F:metalloendopeptidase activity"/>
    <property type="evidence" value="ECO:0007669"/>
    <property type="project" value="InterPro"/>
</dbReference>
<dbReference type="GO" id="GO:0045037">
    <property type="term" value="P:protein import into chloroplast stroma"/>
    <property type="evidence" value="ECO:0000314"/>
    <property type="project" value="TAIR"/>
</dbReference>
<dbReference type="GO" id="GO:0006508">
    <property type="term" value="P:proteolysis"/>
    <property type="evidence" value="ECO:0007669"/>
    <property type="project" value="UniProtKB-KW"/>
</dbReference>
<dbReference type="CDD" id="cd19501">
    <property type="entry name" value="RecA-like_FtsH"/>
    <property type="match status" value="1"/>
</dbReference>
<dbReference type="FunFam" id="3.40.50.300:FF:000982">
    <property type="entry name" value="Inactive ATP-dependent zinc metalloprotease FTSHI 2 like"/>
    <property type="match status" value="1"/>
</dbReference>
<dbReference type="FunFam" id="1.10.8.60:FF:000072">
    <property type="entry name" value="probable inactive ATP-dependent zinc metalloprotease FTSHI 2, chloroplastic"/>
    <property type="match status" value="1"/>
</dbReference>
<dbReference type="FunFam" id="1.20.58.760:FF:000012">
    <property type="entry name" value="probable inactive ATP-dependent zinc metalloprotease FTSHI 2, chloroplastic"/>
    <property type="match status" value="1"/>
</dbReference>
<dbReference type="Gene3D" id="1.10.8.60">
    <property type="match status" value="1"/>
</dbReference>
<dbReference type="Gene3D" id="3.40.50.300">
    <property type="entry name" value="P-loop containing nucleotide triphosphate hydrolases"/>
    <property type="match status" value="1"/>
</dbReference>
<dbReference type="Gene3D" id="1.20.58.760">
    <property type="entry name" value="Peptidase M41"/>
    <property type="match status" value="1"/>
</dbReference>
<dbReference type="InterPro" id="IPR003593">
    <property type="entry name" value="AAA+_ATPase"/>
</dbReference>
<dbReference type="InterPro" id="IPR041569">
    <property type="entry name" value="AAA_lid_3"/>
</dbReference>
<dbReference type="InterPro" id="IPR003959">
    <property type="entry name" value="ATPase_AAA_core"/>
</dbReference>
<dbReference type="InterPro" id="IPR027417">
    <property type="entry name" value="P-loop_NTPase"/>
</dbReference>
<dbReference type="InterPro" id="IPR000642">
    <property type="entry name" value="Peptidase_M41"/>
</dbReference>
<dbReference type="InterPro" id="IPR037219">
    <property type="entry name" value="Peptidase_M41-like"/>
</dbReference>
<dbReference type="PANTHER" id="PTHR23076:SF56">
    <property type="entry name" value="INACTIVE ATP-DEPENDENT ZINC METALLOPROTEASE FTSHI 2, CHLOROPLASTIC-RELATED"/>
    <property type="match status" value="1"/>
</dbReference>
<dbReference type="PANTHER" id="PTHR23076">
    <property type="entry name" value="METALLOPROTEASE M41 FTSH"/>
    <property type="match status" value="1"/>
</dbReference>
<dbReference type="Pfam" id="PF00004">
    <property type="entry name" value="AAA"/>
    <property type="match status" value="1"/>
</dbReference>
<dbReference type="Pfam" id="PF17862">
    <property type="entry name" value="AAA_lid_3"/>
    <property type="match status" value="1"/>
</dbReference>
<dbReference type="Pfam" id="PF01434">
    <property type="entry name" value="Peptidase_M41"/>
    <property type="match status" value="1"/>
</dbReference>
<dbReference type="PRINTS" id="PR00830">
    <property type="entry name" value="ENDOLAPTASE"/>
</dbReference>
<dbReference type="SMART" id="SM00382">
    <property type="entry name" value="AAA"/>
    <property type="match status" value="1"/>
</dbReference>
<dbReference type="SUPFAM" id="SSF140990">
    <property type="entry name" value="FtsH protease domain-like"/>
    <property type="match status" value="1"/>
</dbReference>
<dbReference type="SUPFAM" id="SSF52540">
    <property type="entry name" value="P-loop containing nucleoside triphosphate hydrolases"/>
    <property type="match status" value="1"/>
</dbReference>
<gene>
    <name evidence="4" type="primary">FTSHI2</name>
    <name evidence="6" type="synonym">EMB2083</name>
    <name evidence="8" type="ordered locus">At3g16290</name>
    <name evidence="10" type="ORF">MYA6.12</name>
    <name evidence="9" type="ORF">T2O4.19</name>
</gene>
<evidence type="ECO:0000255" key="1"/>
<evidence type="ECO:0000256" key="2">
    <source>
        <dbReference type="SAM" id="MobiDB-lite"/>
    </source>
</evidence>
<evidence type="ECO:0000269" key="3">
    <source>
    </source>
</evidence>
<evidence type="ECO:0000303" key="4">
    <source>
    </source>
</evidence>
<evidence type="ECO:0000303" key="5">
    <source>
    </source>
</evidence>
<evidence type="ECO:0000303" key="6">
    <source>
    </source>
</evidence>
<evidence type="ECO:0000305" key="7"/>
<evidence type="ECO:0000312" key="8">
    <source>
        <dbReference type="Araport" id="AT3G16290"/>
    </source>
</evidence>
<evidence type="ECO:0000312" key="9">
    <source>
        <dbReference type="EMBL" id="AAB63647.1"/>
    </source>
</evidence>
<evidence type="ECO:0000312" key="10">
    <source>
        <dbReference type="EMBL" id="BAB01269.1"/>
    </source>
</evidence>
<evidence type="ECO:0007829" key="11">
    <source>
        <dbReference type="PDB" id="8XKU"/>
    </source>
</evidence>
<evidence type="ECO:0007829" key="12">
    <source>
        <dbReference type="PDB" id="8XKV"/>
    </source>
</evidence>
<sequence>MACRFPLHSSSPSQFLSPENRQRLPRNYPSISCQNNSATNVVHEDGDDNDKAKTNQVNLLAIPITLTIISASLAKPSFAAAKVTERKRTQKKPQEALTLEQLKAWSKDLPVVSNRIPYTDILSLKAEGKLKHVIKPPNLSLRQKAEPVLVVLEDSRVLRTVLPSLEGNKRFWEQWDELGIDVQCVNAYTPPVKRPPVPSPYLGFLWKVPAYMLTWVKPKKESKRAAELKRMREDFKRQRKEEIETMKEERVMMEKTMKAQKKQQERKKRKAVRKKKYEESLREARKNYRDMADMWARLAQDPNVATALGLVFFYIFYRVVVLNYRKQKKDYEDRLKIEKAEADERKKMRELEREMEGIEEEDEEVEEGTGEKNPYLQMAMQFMKSGARVRRASNKRLPEYLERGVDVKFTDVAGLGKIRLELEEIVKFFTHGEMYRRRGVKIPGGILLCGPPGVGKTLLAKAVAGEAGVNFFSISASQFVEIYVGVGASRVRALYQEARENAPSVVFIDELDAVGRERGLIKGSGGQERDATLNQLLVSLDGFEGRGEVITIASTNRPDILDPALVRPGRFDRKIFIPKPGLIGRMEILQVHARKKPMAEDLDYMAVASMTDGMVGAELANIVEIAAINMMRDGRTELTTDDLLQAAQIEERGMLDRKDRSLETWRQVAINEAAMAVVAVNFPDMKNIEFLTINPRAGRELGYVRVKMDHIKFKEGMLSRQSILDHITVQLAPRAADELWYGEDQLSTIWAETSDNARSAARSLVLGGLSDKHHGLNNFWVADRINDIDVEALRILNMCYERAKEILGRNRTLMDEVVEKLVQKKSLTKQEFFTLVELYGSSKPMPPSILELRKIKRLELEEMVLKLDMTTARNSS</sequence>
<comment type="function">
    <text evidence="3 4">Required for plastid development during embryogenesis (PubMed:24964212). Might be involved in chaperone functions or play a structural role in the thylakoid FtsH complex (PubMed:12185496).</text>
</comment>
<comment type="subunit">
    <text evidence="3">Homooligomer. Interacts with FtsHi4.</text>
</comment>
<comment type="subcellular location">
    <subcellularLocation>
        <location evidence="1">Plastid</location>
        <location evidence="1">Chloroplast membrane</location>
        <topology evidence="1">Multi-pass membrane protein</topology>
    </subcellularLocation>
</comment>
<comment type="disruption phenotype">
    <text evidence="3 6">Embryo defective.</text>
</comment>
<comment type="similarity">
    <text evidence="7">In the N-terminal section; belongs to the AAA ATPase family.</text>
</comment>
<comment type="similarity">
    <text evidence="7">In the C-terminal section; belongs to the peptidase M41 family.</text>
</comment>
<comment type="caution">
    <text evidence="5">Lacks the conserved zinc-binding motif HEXXH, which presumably renders it inactive for proteolysis.</text>
</comment>
<comment type="sequence caution" evidence="7">
    <conflict type="erroneous gene model prediction">
        <sequence resource="EMBL-CDS" id="AAB63647"/>
    </conflict>
    <text>The predicted gene has been split into 2 genes: At3g16290 and At3g16300.</text>
</comment>
<comment type="sequence caution" evidence="7">
    <conflict type="erroneous gene model prediction">
        <sequence resource="EMBL-CDS" id="BAB01269"/>
    </conflict>
    <text>The predicted gene has been split into 2 genes: At3g16290 and At3g16300.</text>
</comment>
<comment type="sequence caution" evidence="7">
    <conflict type="frameshift">
        <sequence resource="EMBL" id="BX823945"/>
    </conflict>
</comment>
<keyword id="KW-0002">3D-structure</keyword>
<keyword id="KW-0067">ATP-binding</keyword>
<keyword id="KW-0150">Chloroplast</keyword>
<keyword id="KW-0378">Hydrolase</keyword>
<keyword id="KW-0472">Membrane</keyword>
<keyword id="KW-0547">Nucleotide-binding</keyword>
<keyword id="KW-0934">Plastid</keyword>
<keyword id="KW-0645">Protease</keyword>
<keyword id="KW-1185">Reference proteome</keyword>
<keyword id="KW-0809">Transit peptide</keyword>
<keyword id="KW-0812">Transmembrane</keyword>
<keyword id="KW-1133">Transmembrane helix</keyword>
<feature type="transit peptide" description="Chloroplast" evidence="1">
    <location>
        <begin position="1"/>
        <end position="32"/>
    </location>
</feature>
<feature type="chain" id="PRO_0000434641" description="Probable inactive ATP-dependent zinc metalloprotease FTSHI 2, chloroplastic">
    <location>
        <begin position="33"/>
        <end position="876"/>
    </location>
</feature>
<feature type="transmembrane region" description="Helical" evidence="1">
    <location>
        <begin position="59"/>
        <end position="79"/>
    </location>
</feature>
<feature type="transmembrane region" description="Helical" evidence="1">
    <location>
        <begin position="304"/>
        <end position="324"/>
    </location>
</feature>
<feature type="region of interest" description="Disordered" evidence="2">
    <location>
        <begin position="1"/>
        <end position="20"/>
    </location>
</feature>
<feature type="region of interest" description="Disordered" evidence="2">
    <location>
        <begin position="256"/>
        <end position="276"/>
    </location>
</feature>
<feature type="region of interest" description="Disordered" evidence="2">
    <location>
        <begin position="350"/>
        <end position="370"/>
    </location>
</feature>
<feature type="compositionally biased region" description="Polar residues" evidence="2">
    <location>
        <begin position="8"/>
        <end position="19"/>
    </location>
</feature>
<feature type="compositionally biased region" description="Basic residues" evidence="2">
    <location>
        <begin position="258"/>
        <end position="275"/>
    </location>
</feature>
<feature type="compositionally biased region" description="Acidic residues" evidence="2">
    <location>
        <begin position="357"/>
        <end position="368"/>
    </location>
</feature>
<feature type="binding site" evidence="1">
    <location>
        <begin position="450"/>
        <end position="457"/>
    </location>
    <ligand>
        <name>ATP</name>
        <dbReference type="ChEBI" id="CHEBI:30616"/>
    </ligand>
</feature>
<feature type="turn" evidence="11">
    <location>
        <begin position="409"/>
        <end position="411"/>
    </location>
</feature>
<feature type="helix" evidence="11">
    <location>
        <begin position="417"/>
        <end position="430"/>
    </location>
</feature>
<feature type="helix" evidence="11">
    <location>
        <begin position="432"/>
        <end position="437"/>
    </location>
</feature>
<feature type="strand" evidence="11">
    <location>
        <begin position="445"/>
        <end position="449"/>
    </location>
</feature>
<feature type="helix" evidence="11">
    <location>
        <begin position="456"/>
        <end position="467"/>
    </location>
</feature>
<feature type="strand" evidence="11">
    <location>
        <begin position="469"/>
        <end position="475"/>
    </location>
</feature>
<feature type="helix" evidence="11">
    <location>
        <begin position="476"/>
        <end position="478"/>
    </location>
</feature>
<feature type="strand" evidence="11">
    <location>
        <begin position="482"/>
        <end position="485"/>
    </location>
</feature>
<feature type="helix" evidence="11">
    <location>
        <begin position="486"/>
        <end position="500"/>
    </location>
</feature>
<feature type="strand" evidence="11">
    <location>
        <begin position="503"/>
        <end position="509"/>
    </location>
</feature>
<feature type="helix" evidence="11">
    <location>
        <begin position="511"/>
        <end position="513"/>
    </location>
</feature>
<feature type="helix" evidence="11">
    <location>
        <begin position="524"/>
        <end position="540"/>
    </location>
</feature>
<feature type="strand" evidence="11">
    <location>
        <begin position="547"/>
        <end position="556"/>
    </location>
</feature>
<feature type="helix" evidence="11">
    <location>
        <begin position="558"/>
        <end position="560"/>
    </location>
</feature>
<feature type="turn" evidence="11">
    <location>
        <begin position="563"/>
        <end position="565"/>
    </location>
</feature>
<feature type="turn" evidence="11">
    <location>
        <begin position="568"/>
        <end position="570"/>
    </location>
</feature>
<feature type="strand" evidence="11">
    <location>
        <begin position="573"/>
        <end position="576"/>
    </location>
</feature>
<feature type="helix" evidence="11">
    <location>
        <begin position="583"/>
        <end position="593"/>
    </location>
</feature>
<feature type="helix" evidence="11">
    <location>
        <begin position="604"/>
        <end position="610"/>
    </location>
</feature>
<feature type="helix" evidence="11">
    <location>
        <begin position="616"/>
        <end position="624"/>
    </location>
</feature>
<feature type="helix" evidence="11">
    <location>
        <begin position="629"/>
        <end position="631"/>
    </location>
</feature>
<feature type="turn" evidence="11">
    <location>
        <begin position="632"/>
        <end position="634"/>
    </location>
</feature>
<feature type="helix" evidence="11">
    <location>
        <begin position="640"/>
        <end position="651"/>
    </location>
</feature>
<feature type="helix" evidence="11">
    <location>
        <begin position="662"/>
        <end position="680"/>
    </location>
</feature>
<feature type="strand" evidence="11">
    <location>
        <begin position="688"/>
        <end position="692"/>
    </location>
</feature>
<feature type="strand" evidence="11">
    <location>
        <begin position="696"/>
        <end position="698"/>
    </location>
</feature>
<feature type="strand" evidence="12">
    <location>
        <begin position="699"/>
        <end position="701"/>
    </location>
</feature>
<feature type="strand" evidence="11">
    <location>
        <begin position="703"/>
        <end position="706"/>
    </location>
</feature>
<feature type="helix" evidence="11">
    <location>
        <begin position="712"/>
        <end position="715"/>
    </location>
</feature>
<feature type="helix" evidence="11">
    <location>
        <begin position="720"/>
        <end position="730"/>
    </location>
</feature>
<feature type="helix" evidence="11">
    <location>
        <begin position="732"/>
        <end position="740"/>
    </location>
</feature>
<feature type="helix" evidence="11">
    <location>
        <begin position="743"/>
        <end position="745"/>
    </location>
</feature>
<feature type="turn" evidence="11">
    <location>
        <begin position="750"/>
        <end position="752"/>
    </location>
</feature>
<feature type="helix" evidence="11">
    <location>
        <begin position="753"/>
        <end position="765"/>
    </location>
</feature>
<feature type="turn" evidence="11">
    <location>
        <begin position="766"/>
        <end position="768"/>
    </location>
</feature>
<feature type="turn" evidence="11">
    <location>
        <begin position="771"/>
        <end position="774"/>
    </location>
</feature>
<feature type="helix" evidence="11">
    <location>
        <begin position="782"/>
        <end position="809"/>
    </location>
</feature>
<feature type="helix" evidence="11">
    <location>
        <begin position="811"/>
        <end position="824"/>
    </location>
</feature>
<feature type="strand" evidence="11">
    <location>
        <begin position="825"/>
        <end position="827"/>
    </location>
</feature>
<feature type="helix" evidence="11">
    <location>
        <begin position="829"/>
        <end position="839"/>
    </location>
</feature>
<feature type="helix" evidence="11">
    <location>
        <begin position="849"/>
        <end position="875"/>
    </location>
</feature>
<reference key="1">
    <citation type="journal article" date="2000" name="DNA Res.">
        <title>Structural analysis of Arabidopsis thaliana chromosome 3. I. Sequence features of the regions of 4,504,864 bp covered by sixty P1 and TAC clones.</title>
        <authorList>
            <person name="Sato S."/>
            <person name="Nakamura Y."/>
            <person name="Kaneko T."/>
            <person name="Katoh T."/>
            <person name="Asamizu E."/>
            <person name="Tabata S."/>
        </authorList>
    </citation>
    <scope>NUCLEOTIDE SEQUENCE [LARGE SCALE GENOMIC DNA]</scope>
    <source>
        <strain>cv. Columbia</strain>
    </source>
</reference>
<reference key="2">
    <citation type="journal article" date="2000" name="Nature">
        <title>Sequence and analysis of chromosome 3 of the plant Arabidopsis thaliana.</title>
        <authorList>
            <person name="Salanoubat M."/>
            <person name="Lemcke K."/>
            <person name="Rieger M."/>
            <person name="Ansorge W."/>
            <person name="Unseld M."/>
            <person name="Fartmann B."/>
            <person name="Valle G."/>
            <person name="Bloecker H."/>
            <person name="Perez-Alonso M."/>
            <person name="Obermaier B."/>
            <person name="Delseny M."/>
            <person name="Boutry M."/>
            <person name="Grivell L.A."/>
            <person name="Mache R."/>
            <person name="Puigdomenech P."/>
            <person name="De Simone V."/>
            <person name="Choisne N."/>
            <person name="Artiguenave F."/>
            <person name="Robert C."/>
            <person name="Brottier P."/>
            <person name="Wincker P."/>
            <person name="Cattolico L."/>
            <person name="Weissenbach J."/>
            <person name="Saurin W."/>
            <person name="Quetier F."/>
            <person name="Schaefer M."/>
            <person name="Mueller-Auer S."/>
            <person name="Gabel C."/>
            <person name="Fuchs M."/>
            <person name="Benes V."/>
            <person name="Wurmbach E."/>
            <person name="Drzonek H."/>
            <person name="Erfle H."/>
            <person name="Jordan N."/>
            <person name="Bangert S."/>
            <person name="Wiedelmann R."/>
            <person name="Kranz H."/>
            <person name="Voss H."/>
            <person name="Holland R."/>
            <person name="Brandt P."/>
            <person name="Nyakatura G."/>
            <person name="Vezzi A."/>
            <person name="D'Angelo M."/>
            <person name="Pallavicini A."/>
            <person name="Toppo S."/>
            <person name="Simionati B."/>
            <person name="Conrad A."/>
            <person name="Hornischer K."/>
            <person name="Kauer G."/>
            <person name="Loehnert T.-H."/>
            <person name="Nordsiek G."/>
            <person name="Reichelt J."/>
            <person name="Scharfe M."/>
            <person name="Schoen O."/>
            <person name="Bargues M."/>
            <person name="Terol J."/>
            <person name="Climent J."/>
            <person name="Navarro P."/>
            <person name="Collado C."/>
            <person name="Perez-Perez A."/>
            <person name="Ottenwaelder B."/>
            <person name="Duchemin D."/>
            <person name="Cooke R."/>
            <person name="Laudie M."/>
            <person name="Berger-Llauro C."/>
            <person name="Purnelle B."/>
            <person name="Masuy D."/>
            <person name="de Haan M."/>
            <person name="Maarse A.C."/>
            <person name="Alcaraz J.-P."/>
            <person name="Cottet A."/>
            <person name="Casacuberta E."/>
            <person name="Monfort A."/>
            <person name="Argiriou A."/>
            <person name="Flores M."/>
            <person name="Liguori R."/>
            <person name="Vitale D."/>
            <person name="Mannhaupt G."/>
            <person name="Haase D."/>
            <person name="Schoof H."/>
            <person name="Rudd S."/>
            <person name="Zaccaria P."/>
            <person name="Mewes H.-W."/>
            <person name="Mayer K.F.X."/>
            <person name="Kaul S."/>
            <person name="Town C.D."/>
            <person name="Koo H.L."/>
            <person name="Tallon L.J."/>
            <person name="Jenkins J."/>
            <person name="Rooney T."/>
            <person name="Rizzo M."/>
            <person name="Walts A."/>
            <person name="Utterback T."/>
            <person name="Fujii C.Y."/>
            <person name="Shea T.P."/>
            <person name="Creasy T.H."/>
            <person name="Haas B."/>
            <person name="Maiti R."/>
            <person name="Wu D."/>
            <person name="Peterson J."/>
            <person name="Van Aken S."/>
            <person name="Pai G."/>
            <person name="Militscher J."/>
            <person name="Sellers P."/>
            <person name="Gill J.E."/>
            <person name="Feldblyum T.V."/>
            <person name="Preuss D."/>
            <person name="Lin X."/>
            <person name="Nierman W.C."/>
            <person name="Salzberg S.L."/>
            <person name="White O."/>
            <person name="Venter J.C."/>
            <person name="Fraser C.M."/>
            <person name="Kaneko T."/>
            <person name="Nakamura Y."/>
            <person name="Sato S."/>
            <person name="Kato T."/>
            <person name="Asamizu E."/>
            <person name="Sasamoto S."/>
            <person name="Kimura T."/>
            <person name="Idesawa K."/>
            <person name="Kawashima K."/>
            <person name="Kishida Y."/>
            <person name="Kiyokawa C."/>
            <person name="Kohara M."/>
            <person name="Matsumoto M."/>
            <person name="Matsuno A."/>
            <person name="Muraki A."/>
            <person name="Nakayama S."/>
            <person name="Nakazaki N."/>
            <person name="Shinpo S."/>
            <person name="Takeuchi C."/>
            <person name="Wada T."/>
            <person name="Watanabe A."/>
            <person name="Yamada M."/>
            <person name="Yasuda M."/>
            <person name="Tabata S."/>
        </authorList>
    </citation>
    <scope>NUCLEOTIDE SEQUENCE [LARGE SCALE GENOMIC DNA]</scope>
    <source>
        <strain>cv. Columbia</strain>
    </source>
</reference>
<reference key="3">
    <citation type="journal article" date="2017" name="Plant J.">
        <title>Araport11: a complete reannotation of the Arabidopsis thaliana reference genome.</title>
        <authorList>
            <person name="Cheng C.Y."/>
            <person name="Krishnakumar V."/>
            <person name="Chan A.P."/>
            <person name="Thibaud-Nissen F."/>
            <person name="Schobel S."/>
            <person name="Town C.D."/>
        </authorList>
    </citation>
    <scope>GENOME REANNOTATION</scope>
    <source>
        <strain>cv. Columbia</strain>
    </source>
</reference>
<reference key="4">
    <citation type="journal article" date="2004" name="Genome Res.">
        <title>Whole genome sequence comparisons and 'full-length' cDNA sequences: a combined approach to evaluate and improve Arabidopsis genome annotation.</title>
        <authorList>
            <person name="Castelli V."/>
            <person name="Aury J.-M."/>
            <person name="Jaillon O."/>
            <person name="Wincker P."/>
            <person name="Clepet C."/>
            <person name="Menard M."/>
            <person name="Cruaud C."/>
            <person name="Quetier F."/>
            <person name="Scarpelli C."/>
            <person name="Schaechter V."/>
            <person name="Temple G."/>
            <person name="Caboche M."/>
            <person name="Weissenbach J."/>
            <person name="Salanoubat M."/>
        </authorList>
    </citation>
    <scope>NUCLEOTIDE SEQUENCE [LARGE SCALE MRNA] OF 412-876</scope>
    <source>
        <strain>cv. Columbia</strain>
    </source>
</reference>
<reference key="5">
    <citation type="journal article" date="2002" name="Curr. Genet.">
        <title>The gene complement for proteolysis in the cyanobacterium Synechocystis sp. PCC 6803 and Arabidopsis thaliana chloroplasts.</title>
        <authorList>
            <person name="Sokolenko A."/>
            <person name="Pojidaeva E."/>
            <person name="Zinchenko V."/>
            <person name="Panichkin V."/>
            <person name="Glaser V.M."/>
            <person name="Herrmann R.G."/>
            <person name="Shestakov S.V."/>
        </authorList>
    </citation>
    <scope>IDENTIFICATION</scope>
    <scope>NOMENCLATURE</scope>
</reference>
<reference key="6">
    <citation type="journal article" date="2004" name="Plant J.">
        <title>The Arabidopsis FtsH metalloprotease gene family: interchangeability of subunits in chloroplast oligomeric complexes.</title>
        <authorList>
            <person name="Yu F."/>
            <person name="Park S."/>
            <person name="Rodermel S.R."/>
        </authorList>
    </citation>
    <scope>IDENTIFICATION</scope>
</reference>
<reference key="7">
    <citation type="journal article" date="2010" name="Curr. Genomics">
        <title>Indispensable roles of plastids in arabidopsis thaliana embryogenesis.</title>
        <authorList>
            <person name="Hsu S.C."/>
            <person name="Belmonte M.F."/>
            <person name="Harada J.J."/>
            <person name="Inoue K."/>
        </authorList>
    </citation>
    <scope>IDENTIFICATION</scope>
    <scope>DISRUPTION PHENOTYPE</scope>
</reference>
<reference key="8">
    <citation type="journal article" date="2012" name="Physiol. Plantarum">
        <title>FtsH proteases located in the plant chloroplast.</title>
        <authorList>
            <person name="Wagner R."/>
            <person name="Aigner H."/>
            <person name="Funk C."/>
        </authorList>
    </citation>
    <scope>GENE FAMILY</scope>
    <scope>REVIEW</scope>
</reference>
<reference key="9">
    <citation type="journal article" date="2014" name="PLoS ONE">
        <title>FtsHi4 is essential for embryogenesis due to its influence on chloroplast development in Arabidopsis.</title>
        <authorList>
            <person name="Lu X."/>
            <person name="Zhang D."/>
            <person name="Li S."/>
            <person name="Su Y."/>
            <person name="Liang Q."/>
            <person name="Meng H."/>
            <person name="Shen S."/>
            <person name="Fan Y."/>
            <person name="Liu C."/>
            <person name="Zhang C."/>
        </authorList>
    </citation>
    <scope>DISRUPTION PHENOTYPE</scope>
    <scope>FUNCTION</scope>
    <scope>INTERACTION WITH FTSI4</scope>
    <scope>SUBUNIT</scope>
</reference>